<evidence type="ECO:0000305" key="1"/>
<accession>A0PJZ0</accession>
<accession>Q4G1B6</accession>
<sequence length="165" mass="18446">MKLFGFRSRRGQTVLGSIDHLYTGSGYRIRYSELQKIHKAAVKGDAAEMERCLARRSGDLDALDKQHRTALHLACASGHVKVVTLLVNRKCQIDIYDKENRTPLIQAVHCQEEACAVILLEHGANPNLKDIYGNTALHYAVYSESTSLAEKLLFHGENIEALDKV</sequence>
<name>A20A5_HUMAN</name>
<gene>
    <name type="primary">ANKRD20A5P</name>
    <name type="synonym">ANKRD20A5</name>
</gene>
<reference key="1">
    <citation type="journal article" date="2005" name="Nature">
        <title>DNA sequence and analysis of human chromosome 18.</title>
        <authorList>
            <person name="Nusbaum C."/>
            <person name="Zody M.C."/>
            <person name="Borowsky M.L."/>
            <person name="Kamal M."/>
            <person name="Kodira C.D."/>
            <person name="Taylor T.D."/>
            <person name="Whittaker C.A."/>
            <person name="Chang J.L."/>
            <person name="Cuomo C.A."/>
            <person name="Dewar K."/>
            <person name="FitzGerald M.G."/>
            <person name="Yang X."/>
            <person name="Abouelleil A."/>
            <person name="Allen N.R."/>
            <person name="Anderson S."/>
            <person name="Bloom T."/>
            <person name="Bugalter B."/>
            <person name="Butler J."/>
            <person name="Cook A."/>
            <person name="DeCaprio D."/>
            <person name="Engels R."/>
            <person name="Garber M."/>
            <person name="Gnirke A."/>
            <person name="Hafez N."/>
            <person name="Hall J.L."/>
            <person name="Norman C.H."/>
            <person name="Itoh T."/>
            <person name="Jaffe D.B."/>
            <person name="Kuroki Y."/>
            <person name="Lehoczky J."/>
            <person name="Lui A."/>
            <person name="Macdonald P."/>
            <person name="Mauceli E."/>
            <person name="Mikkelsen T.S."/>
            <person name="Naylor J.W."/>
            <person name="Nicol R."/>
            <person name="Nguyen C."/>
            <person name="Noguchi H."/>
            <person name="O'Leary S.B."/>
            <person name="Piqani B."/>
            <person name="Smith C.L."/>
            <person name="Talamas J.A."/>
            <person name="Topham K."/>
            <person name="Totoki Y."/>
            <person name="Toyoda A."/>
            <person name="Wain H.M."/>
            <person name="Young S.K."/>
            <person name="Zeng Q."/>
            <person name="Zimmer A.R."/>
            <person name="Fujiyama A."/>
            <person name="Hattori M."/>
            <person name="Birren B.W."/>
            <person name="Sakaki Y."/>
            <person name="Lander E.S."/>
        </authorList>
    </citation>
    <scope>NUCLEOTIDE SEQUENCE [LARGE SCALE GENOMIC DNA]</scope>
</reference>
<reference key="2">
    <citation type="journal article" date="2004" name="Genome Res.">
        <title>The status, quality, and expansion of the NIH full-length cDNA project: the Mammalian Gene Collection (MGC).</title>
        <authorList>
            <consortium name="The MGC Project Team"/>
        </authorList>
    </citation>
    <scope>NUCLEOTIDE SEQUENCE [LARGE SCALE MRNA]</scope>
    <source>
        <tissue>Testis</tissue>
    </source>
</reference>
<feature type="chain" id="PRO_0000348534" description="Putative ankyrin repeat domain-containing protein 20A5">
    <location>
        <begin position="1"/>
        <end position="165"/>
    </location>
</feature>
<feature type="repeat" description="ANK 1">
    <location>
        <begin position="66"/>
        <end position="95"/>
    </location>
</feature>
<feature type="repeat" description="ANK 2">
    <location>
        <begin position="99"/>
        <end position="128"/>
    </location>
</feature>
<feature type="repeat" description="ANK 3">
    <location>
        <begin position="132"/>
        <end position="161"/>
    </location>
</feature>
<organism>
    <name type="scientific">Homo sapiens</name>
    <name type="common">Human</name>
    <dbReference type="NCBI Taxonomy" id="9606"/>
    <lineage>
        <taxon>Eukaryota</taxon>
        <taxon>Metazoa</taxon>
        <taxon>Chordata</taxon>
        <taxon>Craniata</taxon>
        <taxon>Vertebrata</taxon>
        <taxon>Euteleostomi</taxon>
        <taxon>Mammalia</taxon>
        <taxon>Eutheria</taxon>
        <taxon>Euarchontoglires</taxon>
        <taxon>Primates</taxon>
        <taxon>Haplorrhini</taxon>
        <taxon>Catarrhini</taxon>
        <taxon>Hominidae</taxon>
        <taxon>Homo</taxon>
    </lineage>
</organism>
<dbReference type="EMBL" id="AP001004">
    <property type="status" value="NOT_ANNOTATED_CDS"/>
    <property type="molecule type" value="Genomic_DNA"/>
</dbReference>
<dbReference type="EMBL" id="BC022023">
    <property type="protein sequence ID" value="AAH22023.1"/>
    <property type="status" value="ALT_FRAME"/>
    <property type="molecule type" value="mRNA"/>
</dbReference>
<dbReference type="EMBL" id="BC127726">
    <property type="protein sequence ID" value="AAI27727.1"/>
    <property type="molecule type" value="mRNA"/>
</dbReference>
<dbReference type="SMR" id="A0PJZ0"/>
<dbReference type="iPTMnet" id="A0PJZ0"/>
<dbReference type="PhosphoSitePlus" id="A0PJZ0"/>
<dbReference type="BioMuta" id="HGNC:33833"/>
<dbReference type="MassIVE" id="A0PJZ0"/>
<dbReference type="ProteomicsDB" id="74"/>
<dbReference type="AGR" id="HGNC:33833"/>
<dbReference type="GeneCards" id="ANKRD20A5P"/>
<dbReference type="HGNC" id="HGNC:33833">
    <property type="gene designation" value="ANKRD20A5P"/>
</dbReference>
<dbReference type="neXtProt" id="NX_A0PJZ0"/>
<dbReference type="InParanoid" id="A0PJZ0"/>
<dbReference type="PAN-GO" id="A0PJZ0">
    <property type="GO annotations" value="0 GO annotations based on evolutionary models"/>
</dbReference>
<dbReference type="ChiTaRS" id="ANKRD20A5P">
    <property type="organism name" value="human"/>
</dbReference>
<dbReference type="Pharos" id="A0PJZ0">
    <property type="development level" value="Tdark"/>
</dbReference>
<dbReference type="Proteomes" id="UP000005640">
    <property type="component" value="Unplaced"/>
</dbReference>
<dbReference type="RNAct" id="A0PJZ0">
    <property type="molecule type" value="protein"/>
</dbReference>
<dbReference type="FunFam" id="1.25.40.20:FF:000208">
    <property type="entry name" value="Ankyrin repeat domain-containing protein 26"/>
    <property type="match status" value="1"/>
</dbReference>
<dbReference type="Gene3D" id="1.25.40.20">
    <property type="entry name" value="Ankyrin repeat-containing domain"/>
    <property type="match status" value="1"/>
</dbReference>
<dbReference type="InterPro" id="IPR050657">
    <property type="entry name" value="Ankyrin_repeat_domain"/>
</dbReference>
<dbReference type="InterPro" id="IPR002110">
    <property type="entry name" value="Ankyrin_rpt"/>
</dbReference>
<dbReference type="InterPro" id="IPR036770">
    <property type="entry name" value="Ankyrin_rpt-contain_sf"/>
</dbReference>
<dbReference type="PANTHER" id="PTHR24147">
    <property type="entry name" value="ANKYRIN REPEAT DOMAIN 36-RELATED"/>
    <property type="match status" value="1"/>
</dbReference>
<dbReference type="PANTHER" id="PTHR24147:SF1">
    <property type="entry name" value="ANKYRIN REPEAT DOMAIN-CONTAINING PROTEIN 20A1-RELATED"/>
    <property type="match status" value="1"/>
</dbReference>
<dbReference type="Pfam" id="PF00023">
    <property type="entry name" value="Ank"/>
    <property type="match status" value="1"/>
</dbReference>
<dbReference type="Pfam" id="PF12796">
    <property type="entry name" value="Ank_2"/>
    <property type="match status" value="1"/>
</dbReference>
<dbReference type="PRINTS" id="PR01415">
    <property type="entry name" value="ANKYRIN"/>
</dbReference>
<dbReference type="SMART" id="SM00248">
    <property type="entry name" value="ANK"/>
    <property type="match status" value="3"/>
</dbReference>
<dbReference type="SUPFAM" id="SSF48403">
    <property type="entry name" value="Ankyrin repeat"/>
    <property type="match status" value="1"/>
</dbReference>
<dbReference type="PROSITE" id="PS50297">
    <property type="entry name" value="ANK_REP_REGION"/>
    <property type="match status" value="1"/>
</dbReference>
<dbReference type="PROSITE" id="PS50088">
    <property type="entry name" value="ANK_REPEAT"/>
    <property type="match status" value="3"/>
</dbReference>
<comment type="caution">
    <text evidence="1">Could be the product of a pseudogene.</text>
</comment>
<comment type="sequence caution" evidence="1">
    <conflict type="frameshift">
        <sequence resource="EMBL-CDS" id="AAH22023"/>
    </conflict>
</comment>
<keyword id="KW-0040">ANK repeat</keyword>
<keyword id="KW-1267">Proteomics identification</keyword>
<keyword id="KW-1185">Reference proteome</keyword>
<keyword id="KW-0677">Repeat</keyword>
<protein>
    <recommendedName>
        <fullName>Putative ankyrin repeat domain-containing protein 20A5</fullName>
    </recommendedName>
    <alternativeName>
        <fullName>Ankyrin repeat domain-containing protein 20A5 pseudogene</fullName>
    </alternativeName>
</protein>
<proteinExistence type="uncertain"/>